<proteinExistence type="inferred from homology"/>
<protein>
    <recommendedName>
        <fullName evidence="1">7-cyano-7-deazaguanine synthase</fullName>
        <ecNumber evidence="1">6.3.4.20</ecNumber>
    </recommendedName>
    <alternativeName>
        <fullName evidence="1">7-cyano-7-carbaguanine synthase</fullName>
    </alternativeName>
    <alternativeName>
        <fullName evidence="1">Archaeosine biosynthesis protein QueC</fullName>
    </alternativeName>
    <alternativeName>
        <fullName evidence="1">PreQ(0) synthase</fullName>
    </alternativeName>
</protein>
<accession>Q5V0E6</accession>
<comment type="function">
    <text evidence="1">Catalyzes the ATP-dependent conversion of 7-carboxy-7-deazaguanine (CDG) to 7-cyano-7-deazaguanine (preQ(0)).</text>
</comment>
<comment type="catalytic activity">
    <reaction evidence="1">
        <text>7-carboxy-7-deazaguanine + NH4(+) + ATP = 7-cyano-7-deazaguanine + ADP + phosphate + H2O + H(+)</text>
        <dbReference type="Rhea" id="RHEA:27982"/>
        <dbReference type="ChEBI" id="CHEBI:15377"/>
        <dbReference type="ChEBI" id="CHEBI:15378"/>
        <dbReference type="ChEBI" id="CHEBI:28938"/>
        <dbReference type="ChEBI" id="CHEBI:30616"/>
        <dbReference type="ChEBI" id="CHEBI:43474"/>
        <dbReference type="ChEBI" id="CHEBI:45075"/>
        <dbReference type="ChEBI" id="CHEBI:61036"/>
        <dbReference type="ChEBI" id="CHEBI:456216"/>
        <dbReference type="EC" id="6.3.4.20"/>
    </reaction>
</comment>
<comment type="cofactor">
    <cofactor evidence="1">
        <name>Zn(2+)</name>
        <dbReference type="ChEBI" id="CHEBI:29105"/>
    </cofactor>
    <text evidence="1">Binds 1 zinc ion per subunit.</text>
</comment>
<comment type="pathway">
    <text evidence="1">Purine metabolism; 7-cyano-7-deazaguanine biosynthesis.</text>
</comment>
<comment type="similarity">
    <text evidence="1">Belongs to the QueC family.</text>
</comment>
<feature type="chain" id="PRO_0000246974" description="7-cyano-7-deazaguanine synthase">
    <location>
        <begin position="1"/>
        <end position="232"/>
    </location>
</feature>
<feature type="binding site" evidence="1">
    <location>
        <begin position="11"/>
        <end position="21"/>
    </location>
    <ligand>
        <name>ATP</name>
        <dbReference type="ChEBI" id="CHEBI:30616"/>
    </ligand>
</feature>
<feature type="binding site" evidence="1">
    <location>
        <position position="192"/>
    </location>
    <ligand>
        <name>Zn(2+)</name>
        <dbReference type="ChEBI" id="CHEBI:29105"/>
    </ligand>
</feature>
<feature type="binding site" evidence="1">
    <location>
        <position position="200"/>
    </location>
    <ligand>
        <name>Zn(2+)</name>
        <dbReference type="ChEBI" id="CHEBI:29105"/>
    </ligand>
</feature>
<feature type="binding site" evidence="1">
    <location>
        <position position="203"/>
    </location>
    <ligand>
        <name>Zn(2+)</name>
        <dbReference type="ChEBI" id="CHEBI:29105"/>
    </ligand>
</feature>
<feature type="binding site" evidence="1">
    <location>
        <position position="206"/>
    </location>
    <ligand>
        <name>Zn(2+)</name>
        <dbReference type="ChEBI" id="CHEBI:29105"/>
    </ligand>
</feature>
<dbReference type="EC" id="6.3.4.20" evidence="1"/>
<dbReference type="EMBL" id="AY596297">
    <property type="protein sequence ID" value="AAV47007.1"/>
    <property type="molecule type" value="Genomic_DNA"/>
</dbReference>
<dbReference type="RefSeq" id="WP_011224063.1">
    <property type="nucleotide sequence ID" value="NC_006396.1"/>
</dbReference>
<dbReference type="SMR" id="Q5V0E6"/>
<dbReference type="STRING" id="272569.rrnAC2163"/>
<dbReference type="PaxDb" id="272569-rrnAC2163"/>
<dbReference type="EnsemblBacteria" id="AAV47007">
    <property type="protein sequence ID" value="AAV47007"/>
    <property type="gene ID" value="rrnAC2163"/>
</dbReference>
<dbReference type="GeneID" id="40153070"/>
<dbReference type="KEGG" id="hma:rrnAC2163"/>
<dbReference type="PATRIC" id="fig|272569.17.peg.2805"/>
<dbReference type="eggNOG" id="arCOG00039">
    <property type="taxonomic scope" value="Archaea"/>
</dbReference>
<dbReference type="HOGENOM" id="CLU_081854_1_0_2"/>
<dbReference type="UniPathway" id="UPA00391"/>
<dbReference type="Proteomes" id="UP000001169">
    <property type="component" value="Chromosome I"/>
</dbReference>
<dbReference type="GO" id="GO:0005524">
    <property type="term" value="F:ATP binding"/>
    <property type="evidence" value="ECO:0007669"/>
    <property type="project" value="UniProtKB-UniRule"/>
</dbReference>
<dbReference type="GO" id="GO:0016879">
    <property type="term" value="F:ligase activity, forming carbon-nitrogen bonds"/>
    <property type="evidence" value="ECO:0007669"/>
    <property type="project" value="UniProtKB-UniRule"/>
</dbReference>
<dbReference type="GO" id="GO:0008270">
    <property type="term" value="F:zinc ion binding"/>
    <property type="evidence" value="ECO:0007669"/>
    <property type="project" value="UniProtKB-UniRule"/>
</dbReference>
<dbReference type="CDD" id="cd01995">
    <property type="entry name" value="QueC-like"/>
    <property type="match status" value="1"/>
</dbReference>
<dbReference type="Gene3D" id="3.40.50.620">
    <property type="entry name" value="HUPs"/>
    <property type="match status" value="1"/>
</dbReference>
<dbReference type="HAMAP" id="MF_01633">
    <property type="entry name" value="QueC"/>
    <property type="match status" value="1"/>
</dbReference>
<dbReference type="InterPro" id="IPR018317">
    <property type="entry name" value="QueC"/>
</dbReference>
<dbReference type="InterPro" id="IPR014729">
    <property type="entry name" value="Rossmann-like_a/b/a_fold"/>
</dbReference>
<dbReference type="NCBIfam" id="TIGR00364">
    <property type="entry name" value="7-cyano-7-deazaguanine synthase QueC"/>
    <property type="match status" value="1"/>
</dbReference>
<dbReference type="PANTHER" id="PTHR42914">
    <property type="entry name" value="7-CYANO-7-DEAZAGUANINE SYNTHASE"/>
    <property type="match status" value="1"/>
</dbReference>
<dbReference type="PANTHER" id="PTHR42914:SF1">
    <property type="entry name" value="7-CYANO-7-DEAZAGUANINE SYNTHASE"/>
    <property type="match status" value="1"/>
</dbReference>
<dbReference type="Pfam" id="PF06508">
    <property type="entry name" value="QueC"/>
    <property type="match status" value="1"/>
</dbReference>
<dbReference type="PIRSF" id="PIRSF006293">
    <property type="entry name" value="ExsB"/>
    <property type="match status" value="1"/>
</dbReference>
<dbReference type="SUPFAM" id="SSF52402">
    <property type="entry name" value="Adenine nucleotide alpha hydrolases-like"/>
    <property type="match status" value="1"/>
</dbReference>
<gene>
    <name evidence="1" type="primary">queC</name>
    <name type="ordered locus">rrnAC2163</name>
</gene>
<evidence type="ECO:0000255" key="1">
    <source>
        <dbReference type="HAMAP-Rule" id="MF_01633"/>
    </source>
</evidence>
<organism>
    <name type="scientific">Haloarcula marismortui (strain ATCC 43049 / DSM 3752 / JCM 8966 / VKM B-1809)</name>
    <name type="common">Halobacterium marismortui</name>
    <dbReference type="NCBI Taxonomy" id="272569"/>
    <lineage>
        <taxon>Archaea</taxon>
        <taxon>Methanobacteriati</taxon>
        <taxon>Methanobacteriota</taxon>
        <taxon>Stenosarchaea group</taxon>
        <taxon>Halobacteria</taxon>
        <taxon>Halobacteriales</taxon>
        <taxon>Haloarculaceae</taxon>
        <taxon>Haloarcula</taxon>
    </lineage>
</organism>
<sequence>MTDDTRAVVLASGGMDSATAAYEAQTRGYDHLYLLHTSYGQNTEDREYECASALADHVDAADFLHVETGHLTQIGASSLTDDSMEVADADTDSDEIPTSYVPFRNANLLSMAVSYAEANDCGAVFIGAHSEDFSGYPDCRPAFFDAFQGVIDAGTKPDTDIALVAPFVEWSKTDIAERGVELGVPYADTWSCYRDDEPACGTCDACAFRLEAFQRIGERDPIEYAERPTYAE</sequence>
<reference key="1">
    <citation type="journal article" date="2004" name="Genome Res.">
        <title>Genome sequence of Haloarcula marismortui: a halophilic archaeon from the Dead Sea.</title>
        <authorList>
            <person name="Baliga N.S."/>
            <person name="Bonneau R."/>
            <person name="Facciotti M.T."/>
            <person name="Pan M."/>
            <person name="Glusman G."/>
            <person name="Deutsch E.W."/>
            <person name="Shannon P."/>
            <person name="Chiu Y."/>
            <person name="Weng R.S."/>
            <person name="Gan R.R."/>
            <person name="Hung P."/>
            <person name="Date S.V."/>
            <person name="Marcotte E."/>
            <person name="Hood L."/>
            <person name="Ng W.V."/>
        </authorList>
    </citation>
    <scope>NUCLEOTIDE SEQUENCE [LARGE SCALE GENOMIC DNA]</scope>
    <source>
        <strain>ATCC 43049 / DSM 3752 / JCM 8966 / VKM B-1809</strain>
    </source>
</reference>
<name>QUEC_HALMA</name>
<keyword id="KW-0067">ATP-binding</keyword>
<keyword id="KW-0436">Ligase</keyword>
<keyword id="KW-0479">Metal-binding</keyword>
<keyword id="KW-0547">Nucleotide-binding</keyword>
<keyword id="KW-1185">Reference proteome</keyword>
<keyword id="KW-0862">Zinc</keyword>